<sequence>MEAKAVARTIRIAPRKVRLVLDLIRGKNAAEAIAILKLTNKASSPVIEKVLMSALANAEHNYDMNTDELVVKEAYANEGPTLKRFRPRAQGRASAINKRTSHITIVVSDGKEEAKEA</sequence>
<protein>
    <recommendedName>
        <fullName evidence="1">Large ribosomal subunit protein uL22</fullName>
    </recommendedName>
    <alternativeName>
        <fullName evidence="2">50S ribosomal protein L22</fullName>
    </alternativeName>
</protein>
<gene>
    <name evidence="1" type="primary">rplV</name>
    <name type="ordered locus">MW2164</name>
</gene>
<feature type="chain" id="PRO_0000125226" description="Large ribosomal subunit protein uL22">
    <location>
        <begin position="1"/>
        <end position="117"/>
    </location>
</feature>
<evidence type="ECO:0000255" key="1">
    <source>
        <dbReference type="HAMAP-Rule" id="MF_01331"/>
    </source>
</evidence>
<evidence type="ECO:0000305" key="2"/>
<organism>
    <name type="scientific">Staphylococcus aureus (strain MW2)</name>
    <dbReference type="NCBI Taxonomy" id="196620"/>
    <lineage>
        <taxon>Bacteria</taxon>
        <taxon>Bacillati</taxon>
        <taxon>Bacillota</taxon>
        <taxon>Bacilli</taxon>
        <taxon>Bacillales</taxon>
        <taxon>Staphylococcaceae</taxon>
        <taxon>Staphylococcus</taxon>
    </lineage>
</organism>
<comment type="function">
    <text evidence="1">This protein binds specifically to 23S rRNA; its binding is stimulated by other ribosomal proteins, e.g. L4, L17, and L20. It is important during the early stages of 50S assembly. It makes multiple contacts with different domains of the 23S rRNA in the assembled 50S subunit and ribosome (By similarity).</text>
</comment>
<comment type="function">
    <text evidence="1">The globular domain of the protein is located near the polypeptide exit tunnel on the outside of the subunit, while an extended beta-hairpin is found that lines the wall of the exit tunnel in the center of the 70S ribosome.</text>
</comment>
<comment type="subunit">
    <text evidence="1">Part of the 50S ribosomal subunit.</text>
</comment>
<comment type="similarity">
    <text evidence="1">Belongs to the universal ribosomal protein uL22 family.</text>
</comment>
<keyword id="KW-0002">3D-structure</keyword>
<keyword id="KW-0687">Ribonucleoprotein</keyword>
<keyword id="KW-0689">Ribosomal protein</keyword>
<keyword id="KW-0694">RNA-binding</keyword>
<keyword id="KW-0699">rRNA-binding</keyword>
<proteinExistence type="evidence at protein level"/>
<accession>Q7A079</accession>
<dbReference type="EMBL" id="BA000033">
    <property type="protein sequence ID" value="BAB96029.1"/>
    <property type="molecule type" value="Genomic_DNA"/>
</dbReference>
<dbReference type="RefSeq" id="WP_000387527.1">
    <property type="nucleotide sequence ID" value="NC_003923.1"/>
</dbReference>
<dbReference type="PDB" id="8Y36">
    <property type="method" value="EM"/>
    <property type="resolution" value="2.65 A"/>
    <property type="chains" value="Q=1-117"/>
</dbReference>
<dbReference type="PDB" id="8Y37">
    <property type="method" value="EM"/>
    <property type="resolution" value="2.53 A"/>
    <property type="chains" value="Q=1-117"/>
</dbReference>
<dbReference type="PDB" id="8Y38">
    <property type="method" value="EM"/>
    <property type="resolution" value="2.58 A"/>
    <property type="chains" value="Q=1-117"/>
</dbReference>
<dbReference type="PDB" id="8Y39">
    <property type="method" value="EM"/>
    <property type="resolution" value="3.60 A"/>
    <property type="chains" value="Q=1-117"/>
</dbReference>
<dbReference type="PDBsum" id="8Y36"/>
<dbReference type="PDBsum" id="8Y37"/>
<dbReference type="PDBsum" id="8Y38"/>
<dbReference type="PDBsum" id="8Y39"/>
<dbReference type="EMDB" id="EMD-38873"/>
<dbReference type="EMDB" id="EMD-38874"/>
<dbReference type="EMDB" id="EMD-38875"/>
<dbReference type="EMDB" id="EMD-38876"/>
<dbReference type="SMR" id="Q7A079"/>
<dbReference type="GeneID" id="98346557"/>
<dbReference type="KEGG" id="sam:MW2164"/>
<dbReference type="HOGENOM" id="CLU_083987_3_3_9"/>
<dbReference type="GO" id="GO:0022625">
    <property type="term" value="C:cytosolic large ribosomal subunit"/>
    <property type="evidence" value="ECO:0007669"/>
    <property type="project" value="TreeGrafter"/>
</dbReference>
<dbReference type="GO" id="GO:0019843">
    <property type="term" value="F:rRNA binding"/>
    <property type="evidence" value="ECO:0007669"/>
    <property type="project" value="UniProtKB-UniRule"/>
</dbReference>
<dbReference type="GO" id="GO:0003735">
    <property type="term" value="F:structural constituent of ribosome"/>
    <property type="evidence" value="ECO:0007669"/>
    <property type="project" value="InterPro"/>
</dbReference>
<dbReference type="GO" id="GO:0006412">
    <property type="term" value="P:translation"/>
    <property type="evidence" value="ECO:0007669"/>
    <property type="project" value="UniProtKB-UniRule"/>
</dbReference>
<dbReference type="CDD" id="cd00336">
    <property type="entry name" value="Ribosomal_L22"/>
    <property type="match status" value="1"/>
</dbReference>
<dbReference type="FunFam" id="3.90.470.10:FF:000001">
    <property type="entry name" value="50S ribosomal protein L22"/>
    <property type="match status" value="1"/>
</dbReference>
<dbReference type="Gene3D" id="3.90.470.10">
    <property type="entry name" value="Ribosomal protein L22/L17"/>
    <property type="match status" value="1"/>
</dbReference>
<dbReference type="HAMAP" id="MF_01331_B">
    <property type="entry name" value="Ribosomal_uL22_B"/>
    <property type="match status" value="1"/>
</dbReference>
<dbReference type="InterPro" id="IPR001063">
    <property type="entry name" value="Ribosomal_uL22"/>
</dbReference>
<dbReference type="InterPro" id="IPR005727">
    <property type="entry name" value="Ribosomal_uL22_bac/chlpt-type"/>
</dbReference>
<dbReference type="InterPro" id="IPR047867">
    <property type="entry name" value="Ribosomal_uL22_bac/org-type"/>
</dbReference>
<dbReference type="InterPro" id="IPR018260">
    <property type="entry name" value="Ribosomal_uL22_CS"/>
</dbReference>
<dbReference type="InterPro" id="IPR036394">
    <property type="entry name" value="Ribosomal_uL22_sf"/>
</dbReference>
<dbReference type="NCBIfam" id="TIGR01044">
    <property type="entry name" value="rplV_bact"/>
    <property type="match status" value="1"/>
</dbReference>
<dbReference type="PANTHER" id="PTHR13501">
    <property type="entry name" value="CHLOROPLAST 50S RIBOSOMAL PROTEIN L22-RELATED"/>
    <property type="match status" value="1"/>
</dbReference>
<dbReference type="PANTHER" id="PTHR13501:SF8">
    <property type="entry name" value="LARGE RIBOSOMAL SUBUNIT PROTEIN UL22M"/>
    <property type="match status" value="1"/>
</dbReference>
<dbReference type="Pfam" id="PF00237">
    <property type="entry name" value="Ribosomal_L22"/>
    <property type="match status" value="1"/>
</dbReference>
<dbReference type="SUPFAM" id="SSF54843">
    <property type="entry name" value="Ribosomal protein L22"/>
    <property type="match status" value="1"/>
</dbReference>
<dbReference type="PROSITE" id="PS00464">
    <property type="entry name" value="RIBOSOMAL_L22"/>
    <property type="match status" value="1"/>
</dbReference>
<reference key="1">
    <citation type="journal article" date="2002" name="Lancet">
        <title>Genome and virulence determinants of high virulence community-acquired MRSA.</title>
        <authorList>
            <person name="Baba T."/>
            <person name="Takeuchi F."/>
            <person name="Kuroda M."/>
            <person name="Yuzawa H."/>
            <person name="Aoki K."/>
            <person name="Oguchi A."/>
            <person name="Nagai Y."/>
            <person name="Iwama N."/>
            <person name="Asano K."/>
            <person name="Naimi T."/>
            <person name="Kuroda H."/>
            <person name="Cui L."/>
            <person name="Yamamoto K."/>
            <person name="Hiramatsu K."/>
        </authorList>
    </citation>
    <scope>NUCLEOTIDE SEQUENCE [LARGE SCALE GENOMIC DNA]</scope>
    <source>
        <strain>MW2</strain>
    </source>
</reference>
<name>RL22_STAAW</name>